<keyword id="KW-1015">Disulfide bond</keyword>
<keyword id="KW-0249">Electron transport</keyword>
<keyword id="KW-0676">Redox-active center</keyword>
<keyword id="KW-1185">Reference proteome</keyword>
<keyword id="KW-0813">Transport</keyword>
<organism>
    <name type="scientific">Salmonella typhimurium (strain LT2 / SGSC1412 / ATCC 700720)</name>
    <dbReference type="NCBI Taxonomy" id="99287"/>
    <lineage>
        <taxon>Bacteria</taxon>
        <taxon>Pseudomonadati</taxon>
        <taxon>Pseudomonadota</taxon>
        <taxon>Gammaproteobacteria</taxon>
        <taxon>Enterobacterales</taxon>
        <taxon>Enterobacteriaceae</taxon>
        <taxon>Salmonella</taxon>
    </lineage>
</organism>
<proteinExistence type="inferred from homology"/>
<protein>
    <recommendedName>
        <fullName>Glutaredoxin-like protein NrdH</fullName>
    </recommendedName>
</protein>
<comment type="function">
    <text>Electron transport system for the ribonucleotide reductase system NrdEF.</text>
</comment>
<comment type="similarity">
    <text evidence="3">Belongs to the glutaredoxin family.</text>
</comment>
<name>NRDH_SALTY</name>
<gene>
    <name type="primary">nrdH</name>
    <name type="ordered locus">STM2805</name>
</gene>
<feature type="chain" id="PRO_0000141641" description="Glutaredoxin-like protein NrdH">
    <location>
        <begin position="1"/>
        <end position="81"/>
    </location>
</feature>
<feature type="domain" description="Glutaredoxin" evidence="2">
    <location>
        <begin position="1"/>
        <end position="81"/>
    </location>
</feature>
<feature type="disulfide bond" description="Redox-active" evidence="1">
    <location>
        <begin position="11"/>
        <end position="14"/>
    </location>
</feature>
<reference key="1">
    <citation type="journal article" date="1996" name="Mol. Microbiol.">
        <title>Promoter identification and expression analysis of Salmonella typhimurium and Escherichia coli nrdEF operons encoding one of two class I ribonucleotide reductases present in both bacteria.</title>
        <authorList>
            <person name="Jordan A."/>
            <person name="Aragall E."/>
            <person name="Gibert I."/>
            <person name="Barbe J."/>
        </authorList>
    </citation>
    <scope>NUCLEOTIDE SEQUENCE [GENOMIC DNA]</scope>
    <source>
        <strain>LT2</strain>
    </source>
</reference>
<reference key="2">
    <citation type="journal article" date="2001" name="Nature">
        <title>Complete genome sequence of Salmonella enterica serovar Typhimurium LT2.</title>
        <authorList>
            <person name="McClelland M."/>
            <person name="Sanderson K.E."/>
            <person name="Spieth J."/>
            <person name="Clifton S.W."/>
            <person name="Latreille P."/>
            <person name="Courtney L."/>
            <person name="Porwollik S."/>
            <person name="Ali J."/>
            <person name="Dante M."/>
            <person name="Du F."/>
            <person name="Hou S."/>
            <person name="Layman D."/>
            <person name="Leonard S."/>
            <person name="Nguyen C."/>
            <person name="Scott K."/>
            <person name="Holmes A."/>
            <person name="Grewal N."/>
            <person name="Mulvaney E."/>
            <person name="Ryan E."/>
            <person name="Sun H."/>
            <person name="Florea L."/>
            <person name="Miller W."/>
            <person name="Stoneking T."/>
            <person name="Nhan M."/>
            <person name="Waterston R."/>
            <person name="Wilson R.K."/>
        </authorList>
    </citation>
    <scope>NUCLEOTIDE SEQUENCE [LARGE SCALE GENOMIC DNA]</scope>
    <source>
        <strain>LT2 / SGSC1412 / ATCC 700720</strain>
    </source>
</reference>
<sequence>MSITIYTRNNCVQCHATKRAMESRGFEFEMVNVDLVPDAADTLRAQGFRQLPVVMAGDLSWSGFRPDMINRLHPTPHAANA</sequence>
<accession>Q56108</accession>
<dbReference type="EMBL" id="X73226">
    <property type="protein sequence ID" value="CAA51697.1"/>
    <property type="molecule type" value="Genomic_DNA"/>
</dbReference>
<dbReference type="EMBL" id="AE006468">
    <property type="protein sequence ID" value="AAL21690.1"/>
    <property type="molecule type" value="Genomic_DNA"/>
</dbReference>
<dbReference type="RefSeq" id="NP_461731.1">
    <property type="nucleotide sequence ID" value="NC_003197.2"/>
</dbReference>
<dbReference type="RefSeq" id="WP_000028870.1">
    <property type="nucleotide sequence ID" value="NC_003197.2"/>
</dbReference>
<dbReference type="SMR" id="Q56108"/>
<dbReference type="STRING" id="99287.STM2805"/>
<dbReference type="PaxDb" id="99287-STM2805"/>
<dbReference type="GeneID" id="1254328"/>
<dbReference type="KEGG" id="stm:STM2805"/>
<dbReference type="PATRIC" id="fig|99287.12.peg.2963"/>
<dbReference type="HOGENOM" id="CLU_026126_9_0_6"/>
<dbReference type="OMA" id="HWSGYRP"/>
<dbReference type="PhylomeDB" id="Q56108"/>
<dbReference type="BioCyc" id="SENT99287:STM2805-MONOMER"/>
<dbReference type="Proteomes" id="UP000001014">
    <property type="component" value="Chromosome"/>
</dbReference>
<dbReference type="GO" id="GO:0009055">
    <property type="term" value="F:electron transfer activity"/>
    <property type="evidence" value="ECO:0000318"/>
    <property type="project" value="GO_Central"/>
</dbReference>
<dbReference type="GO" id="GO:0045454">
    <property type="term" value="P:cell redox homeostasis"/>
    <property type="evidence" value="ECO:0000318"/>
    <property type="project" value="GO_Central"/>
</dbReference>
<dbReference type="CDD" id="cd02976">
    <property type="entry name" value="NrdH"/>
    <property type="match status" value="1"/>
</dbReference>
<dbReference type="Gene3D" id="3.40.30.10">
    <property type="entry name" value="Glutaredoxin"/>
    <property type="match status" value="1"/>
</dbReference>
<dbReference type="InterPro" id="IPR011909">
    <property type="entry name" value="GlrX_NrdH"/>
</dbReference>
<dbReference type="InterPro" id="IPR002109">
    <property type="entry name" value="Glutaredoxin"/>
</dbReference>
<dbReference type="InterPro" id="IPR051548">
    <property type="entry name" value="Grx-like_ET"/>
</dbReference>
<dbReference type="InterPro" id="IPR036249">
    <property type="entry name" value="Thioredoxin-like_sf"/>
</dbReference>
<dbReference type="NCBIfam" id="TIGR02194">
    <property type="entry name" value="GlrX_NrdH"/>
    <property type="match status" value="1"/>
</dbReference>
<dbReference type="NCBIfam" id="NF007657">
    <property type="entry name" value="PRK10329.1"/>
    <property type="match status" value="1"/>
</dbReference>
<dbReference type="PANTHER" id="PTHR34386">
    <property type="entry name" value="GLUTAREDOXIN"/>
    <property type="match status" value="1"/>
</dbReference>
<dbReference type="PANTHER" id="PTHR34386:SF1">
    <property type="entry name" value="GLUTAREDOXIN-LIKE PROTEIN NRDH"/>
    <property type="match status" value="1"/>
</dbReference>
<dbReference type="Pfam" id="PF00462">
    <property type="entry name" value="Glutaredoxin"/>
    <property type="match status" value="1"/>
</dbReference>
<dbReference type="SUPFAM" id="SSF52833">
    <property type="entry name" value="Thioredoxin-like"/>
    <property type="match status" value="1"/>
</dbReference>
<dbReference type="PROSITE" id="PS51354">
    <property type="entry name" value="GLUTAREDOXIN_2"/>
    <property type="match status" value="1"/>
</dbReference>
<evidence type="ECO:0000250" key="1"/>
<evidence type="ECO:0000255" key="2">
    <source>
        <dbReference type="PROSITE-ProRule" id="PRU00686"/>
    </source>
</evidence>
<evidence type="ECO:0000305" key="3"/>